<proteinExistence type="evidence at protein level"/>
<keyword id="KW-0025">Alternative splicing</keyword>
<keyword id="KW-0963">Cytoplasm</keyword>
<keyword id="KW-0597">Phosphoprotein</keyword>
<keyword id="KW-1185">Reference proteome</keyword>
<sequence length="1291" mass="142885">MGARAFSHDSIFIPDGGAESEQTVQAMSQDNILGKVKTLQRQLGKNIKFGQRPSNAIPMKKAGSTDASSEEDFVLTSPMEIVTQQDIVPSDTENKSSDTPSSSSPLNLPEAGSDMEEKVAPVKPSRPKRHLSSAGTIESVNLDAIPLAIARLDNSAARHKLAVKPKNQRVSRKHRWLAQDRQNEPGSFESQSSLDQNGQLGEDKHIWHGEEPEPLESHEEKRLHEEYWRELEAKCKRQKAEAAEKRRQEEQRRQALERRLWEESLRQELLEEEEEGEEEEEVKEEGEEGEEVGLQPRAGKVPPEEGHQSGPEEQRCTEQELGGADDPARLEAEERRREQEEAERQAEKLRQREAERQEEEQKQREAERQEEEARQCEAERQAEKLRQREAERQEEEARQREAERQAEKLRQREAERQEEELRQREEAERQEKLRQRDAESQEEELRQREAERQRAQEEDAKGMLQEEEEEAKRIEELKGKETPEPLVEEGPQSPEGESQPWLTDDADQRSPLQRDLEKPGEREREDLESAGQREIAEEPRGEGEPAEQSGDLDAHCGGVDGEGKETAQTDSPQPQERQMEGTPAPEENEATAADIDRKVEELRWQEVDERQTMPRPYTFQVSSGSRQILFPKVNLSPVTPAKDASLAPAAQEPPAPRGAASHALPSALSIPHTAILVTGAQLCGPAVNLSQIKDTACKSLLGLSEEKRPMDVPTVESRAGSGKSRPAPESPSNAAALAEWASIRSRILKNSEGDQRGDREPARAGDEPVPRARCDSRGNVRRTPPVNAKFSIMPAWQKFSDSGAETFRQSLDGESGRKKPGLAPSEETAPQPHAAAQQEVSQEPPDTTDGCKFAKDLPSFLVPGLPSPQKAASRTESTTTLDSETTSDVGNPDPAMPGGEEKASPFGIKLRRTNYSLRFHCDQQAEQKKKKRHSSTGDSVGGATPATGSVSGESEPEATFLKHGPSLPQERKPALSPRKDSAESHSSGHYVAVAQSGLPPASGQTPAPEQDRAVSKMPSMQKPALAPKPASQTPPSSPLSKLSRPHLVELLARRAGKLDSEPSETAKESSDNQPPSPSLPEELKGQKRDEKDVPEKKPASPPLPAGQQERPSLIPETGRKEKPVLQSRHSLDGSKVTEKVETAQPLWITLALQKQKGFREQQATREERKQAREAKQAEKLSKETVSVSLQPGSSRASKTAPVHKPAAPSEEKKPETAVSRLQRREQLKKSNTLPTSVTVEISDSAPSAALVKDVTKRFSTPDAAPVSTEPAWLALAKRKAKAWSDCPQIIK</sequence>
<accession>Q5PR69</accession>
<accession>E9Q3Y7</accession>
<accession>E9Q5L4</accession>
<accession>E9QLP4</accession>
<accession>Q80TH6</accession>
<accession>Q8C7K8</accession>
<accession>Q8C7R0</accession>
<accession>Q8C9F2</accession>
<accession>Q8CDM6</accession>
<name>CRACD_MOUSE</name>
<evidence type="ECO:0000250" key="1">
    <source>
        <dbReference type="UniProtKB" id="Q6ZU35"/>
    </source>
</evidence>
<evidence type="ECO:0000256" key="2">
    <source>
        <dbReference type="SAM" id="MobiDB-lite"/>
    </source>
</evidence>
<evidence type="ECO:0000269" key="3">
    <source>
    </source>
</evidence>
<evidence type="ECO:0000303" key="4">
    <source>
    </source>
</evidence>
<evidence type="ECO:0000305" key="5"/>
<evidence type="ECO:0000305" key="6">
    <source>
    </source>
</evidence>
<evidence type="ECO:0000312" key="7">
    <source>
        <dbReference type="MGI" id="MGI:2444817"/>
    </source>
</evidence>
<evidence type="ECO:0007744" key="8">
    <source>
    </source>
</evidence>
<protein>
    <recommendedName>
        <fullName evidence="7">Capping protein-inhibiting regulator of actin dynamics</fullName>
    </recommendedName>
    <alternativeName>
        <fullName evidence="4">Cancer-related regulator of actin dynamics</fullName>
    </alternativeName>
</protein>
<reference key="1">
    <citation type="journal article" date="2009" name="PLoS Biol.">
        <title>Lineage-specific biology revealed by a finished genome assembly of the mouse.</title>
        <authorList>
            <person name="Church D.M."/>
            <person name="Goodstadt L."/>
            <person name="Hillier L.W."/>
            <person name="Zody M.C."/>
            <person name="Goldstein S."/>
            <person name="She X."/>
            <person name="Bult C.J."/>
            <person name="Agarwala R."/>
            <person name="Cherry J.L."/>
            <person name="DiCuccio M."/>
            <person name="Hlavina W."/>
            <person name="Kapustin Y."/>
            <person name="Meric P."/>
            <person name="Maglott D."/>
            <person name="Birtle Z."/>
            <person name="Marques A.C."/>
            <person name="Graves T."/>
            <person name="Zhou S."/>
            <person name="Teague B."/>
            <person name="Potamousis K."/>
            <person name="Churas C."/>
            <person name="Place M."/>
            <person name="Herschleb J."/>
            <person name="Runnheim R."/>
            <person name="Forrest D."/>
            <person name="Amos-Landgraf J."/>
            <person name="Schwartz D.C."/>
            <person name="Cheng Z."/>
            <person name="Lindblad-Toh K."/>
            <person name="Eichler E.E."/>
            <person name="Ponting C.P."/>
        </authorList>
    </citation>
    <scope>NUCLEOTIDE SEQUENCE [LARGE SCALE GENOMIC DNA]</scope>
    <source>
        <strain>C57BL/6J</strain>
    </source>
</reference>
<reference key="2">
    <citation type="journal article" date="2004" name="Genome Res.">
        <title>The status, quality, and expansion of the NIH full-length cDNA project: the Mammalian Gene Collection (MGC).</title>
        <authorList>
            <consortium name="The MGC Project Team"/>
        </authorList>
    </citation>
    <scope>NUCLEOTIDE SEQUENCE [LARGE SCALE MRNA] OF 431-1291 (ISOFORM 3)</scope>
    <source>
        <strain>C57BL/6J</strain>
        <tissue>Brain</tissue>
    </source>
</reference>
<reference key="3">
    <citation type="journal article" date="2003" name="DNA Res.">
        <title>Prediction of the coding sequences of mouse homologues of KIAA gene: II. The complete nucleotide sequences of 400 mouse KIAA-homologous cDNAs identified by screening of terminal sequences of cDNA clones randomly sampled from size-fractionated libraries.</title>
        <authorList>
            <person name="Okazaki N."/>
            <person name="Kikuno R."/>
            <person name="Ohara R."/>
            <person name="Inamoto S."/>
            <person name="Aizawa H."/>
            <person name="Yuasa S."/>
            <person name="Nakajima D."/>
            <person name="Nagase T."/>
            <person name="Ohara O."/>
            <person name="Koga H."/>
        </authorList>
    </citation>
    <scope>NUCLEOTIDE SEQUENCE [LARGE SCALE MRNA] OF 580-1291 (ISOFORM 3)</scope>
    <source>
        <tissue>Brain</tissue>
    </source>
</reference>
<reference key="4">
    <citation type="journal article" date="2005" name="Science">
        <title>The transcriptional landscape of the mammalian genome.</title>
        <authorList>
            <person name="Carninci P."/>
            <person name="Kasukawa T."/>
            <person name="Katayama S."/>
            <person name="Gough J."/>
            <person name="Frith M.C."/>
            <person name="Maeda N."/>
            <person name="Oyama R."/>
            <person name="Ravasi T."/>
            <person name="Lenhard B."/>
            <person name="Wells C."/>
            <person name="Kodzius R."/>
            <person name="Shimokawa K."/>
            <person name="Bajic V.B."/>
            <person name="Brenner S.E."/>
            <person name="Batalov S."/>
            <person name="Forrest A.R."/>
            <person name="Zavolan M."/>
            <person name="Davis M.J."/>
            <person name="Wilming L.G."/>
            <person name="Aidinis V."/>
            <person name="Allen J.E."/>
            <person name="Ambesi-Impiombato A."/>
            <person name="Apweiler R."/>
            <person name="Aturaliya R.N."/>
            <person name="Bailey T.L."/>
            <person name="Bansal M."/>
            <person name="Baxter L."/>
            <person name="Beisel K.W."/>
            <person name="Bersano T."/>
            <person name="Bono H."/>
            <person name="Chalk A.M."/>
            <person name="Chiu K.P."/>
            <person name="Choudhary V."/>
            <person name="Christoffels A."/>
            <person name="Clutterbuck D.R."/>
            <person name="Crowe M.L."/>
            <person name="Dalla E."/>
            <person name="Dalrymple B.P."/>
            <person name="de Bono B."/>
            <person name="Della Gatta G."/>
            <person name="di Bernardo D."/>
            <person name="Down T."/>
            <person name="Engstrom P."/>
            <person name="Fagiolini M."/>
            <person name="Faulkner G."/>
            <person name="Fletcher C.F."/>
            <person name="Fukushima T."/>
            <person name="Furuno M."/>
            <person name="Futaki S."/>
            <person name="Gariboldi M."/>
            <person name="Georgii-Hemming P."/>
            <person name="Gingeras T.R."/>
            <person name="Gojobori T."/>
            <person name="Green R.E."/>
            <person name="Gustincich S."/>
            <person name="Harbers M."/>
            <person name="Hayashi Y."/>
            <person name="Hensch T.K."/>
            <person name="Hirokawa N."/>
            <person name="Hill D."/>
            <person name="Huminiecki L."/>
            <person name="Iacono M."/>
            <person name="Ikeo K."/>
            <person name="Iwama A."/>
            <person name="Ishikawa T."/>
            <person name="Jakt M."/>
            <person name="Kanapin A."/>
            <person name="Katoh M."/>
            <person name="Kawasawa Y."/>
            <person name="Kelso J."/>
            <person name="Kitamura H."/>
            <person name="Kitano H."/>
            <person name="Kollias G."/>
            <person name="Krishnan S.P."/>
            <person name="Kruger A."/>
            <person name="Kummerfeld S.K."/>
            <person name="Kurochkin I.V."/>
            <person name="Lareau L.F."/>
            <person name="Lazarevic D."/>
            <person name="Lipovich L."/>
            <person name="Liu J."/>
            <person name="Liuni S."/>
            <person name="McWilliam S."/>
            <person name="Madan Babu M."/>
            <person name="Madera M."/>
            <person name="Marchionni L."/>
            <person name="Matsuda H."/>
            <person name="Matsuzawa S."/>
            <person name="Miki H."/>
            <person name="Mignone F."/>
            <person name="Miyake S."/>
            <person name="Morris K."/>
            <person name="Mottagui-Tabar S."/>
            <person name="Mulder N."/>
            <person name="Nakano N."/>
            <person name="Nakauchi H."/>
            <person name="Ng P."/>
            <person name="Nilsson R."/>
            <person name="Nishiguchi S."/>
            <person name="Nishikawa S."/>
            <person name="Nori F."/>
            <person name="Ohara O."/>
            <person name="Okazaki Y."/>
            <person name="Orlando V."/>
            <person name="Pang K.C."/>
            <person name="Pavan W.J."/>
            <person name="Pavesi G."/>
            <person name="Pesole G."/>
            <person name="Petrovsky N."/>
            <person name="Piazza S."/>
            <person name="Reed J."/>
            <person name="Reid J.F."/>
            <person name="Ring B.Z."/>
            <person name="Ringwald M."/>
            <person name="Rost B."/>
            <person name="Ruan Y."/>
            <person name="Salzberg S.L."/>
            <person name="Sandelin A."/>
            <person name="Schneider C."/>
            <person name="Schoenbach C."/>
            <person name="Sekiguchi K."/>
            <person name="Semple C.A."/>
            <person name="Seno S."/>
            <person name="Sessa L."/>
            <person name="Sheng Y."/>
            <person name="Shibata Y."/>
            <person name="Shimada H."/>
            <person name="Shimada K."/>
            <person name="Silva D."/>
            <person name="Sinclair B."/>
            <person name="Sperling S."/>
            <person name="Stupka E."/>
            <person name="Sugiura K."/>
            <person name="Sultana R."/>
            <person name="Takenaka Y."/>
            <person name="Taki K."/>
            <person name="Tammoja K."/>
            <person name="Tan S.L."/>
            <person name="Tang S."/>
            <person name="Taylor M.S."/>
            <person name="Tegner J."/>
            <person name="Teichmann S.A."/>
            <person name="Ueda H.R."/>
            <person name="van Nimwegen E."/>
            <person name="Verardo R."/>
            <person name="Wei C.L."/>
            <person name="Yagi K."/>
            <person name="Yamanishi H."/>
            <person name="Zabarovsky E."/>
            <person name="Zhu S."/>
            <person name="Zimmer A."/>
            <person name="Hide W."/>
            <person name="Bult C."/>
            <person name="Grimmond S.M."/>
            <person name="Teasdale R.D."/>
            <person name="Liu E.T."/>
            <person name="Brusic V."/>
            <person name="Quackenbush J."/>
            <person name="Wahlestedt C."/>
            <person name="Mattick J.S."/>
            <person name="Hume D.A."/>
            <person name="Kai C."/>
            <person name="Sasaki D."/>
            <person name="Tomaru Y."/>
            <person name="Fukuda S."/>
            <person name="Kanamori-Katayama M."/>
            <person name="Suzuki M."/>
            <person name="Aoki J."/>
            <person name="Arakawa T."/>
            <person name="Iida J."/>
            <person name="Imamura K."/>
            <person name="Itoh M."/>
            <person name="Kato T."/>
            <person name="Kawaji H."/>
            <person name="Kawagashira N."/>
            <person name="Kawashima T."/>
            <person name="Kojima M."/>
            <person name="Kondo S."/>
            <person name="Konno H."/>
            <person name="Nakano K."/>
            <person name="Ninomiya N."/>
            <person name="Nishio T."/>
            <person name="Okada M."/>
            <person name="Plessy C."/>
            <person name="Shibata K."/>
            <person name="Shiraki T."/>
            <person name="Suzuki S."/>
            <person name="Tagami M."/>
            <person name="Waki K."/>
            <person name="Watahiki A."/>
            <person name="Okamura-Oho Y."/>
            <person name="Suzuki H."/>
            <person name="Kawai J."/>
            <person name="Hayashizaki Y."/>
        </authorList>
    </citation>
    <scope>NUCLEOTIDE SEQUENCE [LARGE SCALE MRNA] OF 980-1291; 1018-1291 AND 1046-1291 (ISOFORM 3)</scope>
    <scope>NUCLEOTIDE SEQUENCE [LARGE SCALE MRNA] OF 946-1288 (ISOFORM 4)</scope>
    <source>
        <strain>C57BL/6J</strain>
        <tissue>Hippocampus</tissue>
        <tissue>Spinal cord</tissue>
        <tissue>Testis</tissue>
        <tissue>Thymus</tissue>
    </source>
</reference>
<reference key="5">
    <citation type="journal article" date="2010" name="Cell">
        <title>A tissue-specific atlas of mouse protein phosphorylation and expression.</title>
        <authorList>
            <person name="Huttlin E.L."/>
            <person name="Jedrychowski M.P."/>
            <person name="Elias J.E."/>
            <person name="Goswami T."/>
            <person name="Rad R."/>
            <person name="Beausoleil S.A."/>
            <person name="Villen J."/>
            <person name="Haas W."/>
            <person name="Sowa M.E."/>
            <person name="Gygi S.P."/>
        </authorList>
    </citation>
    <scope>PHOSPHORYLATION [LARGE SCALE ANALYSIS] AT SER-7; SER-28; SER-132; THR-482; SER-493; SER-510 AND SER-867</scope>
    <scope>IDENTIFICATION BY MASS SPECTROMETRY [LARGE SCALE ANALYSIS]</scope>
    <source>
        <tissue>Brain</tissue>
        <tissue>Lung</tissue>
        <tissue>Spleen</tissue>
        <tissue>Testis</tissue>
    </source>
</reference>
<reference key="6">
    <citation type="journal article" date="2018" name="Nat. Cell Biol.">
        <title>Deregulation of CRAD-controlled cytoskeleton initiates mucinous colorectal cancer via beta-catenin.</title>
        <authorList>
            <person name="Jung Y.S."/>
            <person name="Wang W."/>
            <person name="Jun S."/>
            <person name="Zhang J."/>
            <person name="Srivastava M."/>
            <person name="Kim M.J."/>
            <person name="Lien E.M."/>
            <person name="Shang J."/>
            <person name="Chen J."/>
            <person name="McCrea P.D."/>
            <person name="Zhang S."/>
            <person name="Park J.I."/>
        </authorList>
    </citation>
    <scope>FUNCTION</scope>
    <scope>SUBCELLULAR LOCATION</scope>
    <scope>DISRUPTION PHENOTYPE</scope>
    <scope>TISSUE SPECIFICITY</scope>
</reference>
<dbReference type="EMBL" id="AC166328">
    <property type="status" value="NOT_ANNOTATED_CDS"/>
    <property type="molecule type" value="Genomic_DNA"/>
</dbReference>
<dbReference type="EMBL" id="BC086807">
    <property type="protein sequence ID" value="AAH86807.1"/>
    <property type="molecule type" value="mRNA"/>
</dbReference>
<dbReference type="EMBL" id="AK122469">
    <property type="protein sequence ID" value="BAC65751.1"/>
    <property type="molecule type" value="mRNA"/>
</dbReference>
<dbReference type="EMBL" id="AK029850">
    <property type="protein sequence ID" value="BAC26643.1"/>
    <property type="molecule type" value="mRNA"/>
</dbReference>
<dbReference type="EMBL" id="AK042228">
    <property type="protein sequence ID" value="BAC31199.1"/>
    <property type="molecule type" value="mRNA"/>
</dbReference>
<dbReference type="EMBL" id="AK049629">
    <property type="protein sequence ID" value="BAC33846.1"/>
    <property type="molecule type" value="mRNA"/>
</dbReference>
<dbReference type="EMBL" id="AK050000">
    <property type="protein sequence ID" value="BAC34025.1"/>
    <property type="molecule type" value="mRNA"/>
</dbReference>
<dbReference type="CCDS" id="CCDS51526.1">
    <molecule id="Q5PR69-4"/>
</dbReference>
<dbReference type="RefSeq" id="NP_001157265.1">
    <molecule id="Q5PR69-4"/>
    <property type="nucleotide sequence ID" value="NM_001163793.2"/>
</dbReference>
<dbReference type="RefSeq" id="XP_006535066.1">
    <property type="nucleotide sequence ID" value="XM_006535003.3"/>
</dbReference>
<dbReference type="RefSeq" id="XP_006535067.1">
    <molecule id="Q5PR69-3"/>
    <property type="nucleotide sequence ID" value="XM_006535004.4"/>
</dbReference>
<dbReference type="RefSeq" id="XP_006535071.1">
    <molecule id="Q5PR69-3"/>
    <property type="nucleotide sequence ID" value="XM_006535008.2"/>
</dbReference>
<dbReference type="RefSeq" id="XP_011247782.1">
    <molecule id="Q5PR69-4"/>
    <property type="nucleotide sequence ID" value="XM_011249480.1"/>
</dbReference>
<dbReference type="RefSeq" id="XP_011247784.1">
    <molecule id="Q5PR69-3"/>
    <property type="nucleotide sequence ID" value="XM_011249482.4"/>
</dbReference>
<dbReference type="RefSeq" id="XP_017176416.1">
    <property type="nucleotide sequence ID" value="XM_017320927.1"/>
</dbReference>
<dbReference type="RefSeq" id="XP_030110440.1">
    <molecule id="Q5PR69-3"/>
    <property type="nucleotide sequence ID" value="XM_030254580.1"/>
</dbReference>
<dbReference type="RefSeq" id="XP_030110441.1">
    <molecule id="Q5PR69-3"/>
    <property type="nucleotide sequence ID" value="XM_030254581.2"/>
</dbReference>
<dbReference type="SMR" id="Q5PR69"/>
<dbReference type="BioGRID" id="236322">
    <property type="interactions" value="2"/>
</dbReference>
<dbReference type="FunCoup" id="Q5PR69">
    <property type="interactions" value="25"/>
</dbReference>
<dbReference type="STRING" id="10090.ENSMUSP00000127212"/>
<dbReference type="GlyGen" id="Q5PR69">
    <property type="glycosylation" value="2 sites"/>
</dbReference>
<dbReference type="iPTMnet" id="Q5PR69"/>
<dbReference type="PhosphoSitePlus" id="Q5PR69"/>
<dbReference type="jPOST" id="Q5PR69"/>
<dbReference type="PaxDb" id="10090-ENSMUSP00000113947"/>
<dbReference type="PeptideAtlas" id="Q5PR69"/>
<dbReference type="ProteomicsDB" id="305777"/>
<dbReference type="ProteomicsDB" id="328763"/>
<dbReference type="Pumba" id="Q5PR69"/>
<dbReference type="Antibodypedia" id="56722">
    <property type="antibodies" value="12 antibodies from 7 providers"/>
</dbReference>
<dbReference type="Ensembl" id="ENSMUST00000120639.9">
    <molecule id="Q5PR69-4"/>
    <property type="protein sequence ID" value="ENSMUSP00000113796.3"/>
    <property type="gene ID" value="ENSMUSG00000036377.21"/>
</dbReference>
<dbReference type="Ensembl" id="ENSMUST00000121160.8">
    <molecule id="Q5PR69-3"/>
    <property type="protein sequence ID" value="ENSMUSP00000113947.2"/>
    <property type="gene ID" value="ENSMUSG00000036377.21"/>
</dbReference>
<dbReference type="GeneID" id="320827"/>
<dbReference type="KEGG" id="mmu:320827"/>
<dbReference type="UCSC" id="uc008xvh.2">
    <molecule id="Q5PR69-3"/>
    <property type="organism name" value="mouse"/>
</dbReference>
<dbReference type="AGR" id="MGI:2444817"/>
<dbReference type="CTD" id="57482"/>
<dbReference type="MGI" id="MGI:2444817">
    <property type="gene designation" value="Cracd"/>
</dbReference>
<dbReference type="VEuPathDB" id="HostDB:ENSMUSG00000036377"/>
<dbReference type="eggNOG" id="KOG1808">
    <property type="taxonomic scope" value="Eukaryota"/>
</dbReference>
<dbReference type="GeneTree" id="ENSGT00940000161471"/>
<dbReference type="HOGENOM" id="CLU_008508_0_0_1"/>
<dbReference type="InParanoid" id="Q5PR69"/>
<dbReference type="OMA" id="ECKFAKD"/>
<dbReference type="TreeFam" id="TF335584"/>
<dbReference type="BioGRID-ORCS" id="320827">
    <property type="hits" value="2 hits in 78 CRISPR screens"/>
</dbReference>
<dbReference type="ChiTaRS" id="C530008M17Rik">
    <property type="organism name" value="mouse"/>
</dbReference>
<dbReference type="PRO" id="PR:Q5PR69"/>
<dbReference type="Proteomes" id="UP000000589">
    <property type="component" value="Chromosome 5"/>
</dbReference>
<dbReference type="RNAct" id="Q5PR69">
    <property type="molecule type" value="protein"/>
</dbReference>
<dbReference type="Bgee" id="ENSMUSG00000036377">
    <property type="expression patterns" value="Expressed in habenula and 226 other cell types or tissues"/>
</dbReference>
<dbReference type="GO" id="GO:0005829">
    <property type="term" value="C:cytosol"/>
    <property type="evidence" value="ECO:0007669"/>
    <property type="project" value="UniProtKB-SubCell"/>
</dbReference>
<dbReference type="GO" id="GO:0010669">
    <property type="term" value="P:epithelial structure maintenance"/>
    <property type="evidence" value="ECO:0000315"/>
    <property type="project" value="UniProtKB"/>
</dbReference>
<dbReference type="GO" id="GO:0030277">
    <property type="term" value="P:maintenance of gastrointestinal epithelium"/>
    <property type="evidence" value="ECO:0000315"/>
    <property type="project" value="UniProtKB"/>
</dbReference>
<dbReference type="GO" id="GO:2000813">
    <property type="term" value="P:negative regulation of barbed-end actin filament capping"/>
    <property type="evidence" value="ECO:0000250"/>
    <property type="project" value="UniProtKB"/>
</dbReference>
<dbReference type="GO" id="GO:0030838">
    <property type="term" value="P:positive regulation of actin filament polymerization"/>
    <property type="evidence" value="ECO:0000250"/>
    <property type="project" value="UniProtKB"/>
</dbReference>
<dbReference type="InterPro" id="IPR052853">
    <property type="entry name" value="Actin_dynamics_regulator"/>
</dbReference>
<dbReference type="InterPro" id="IPR028030">
    <property type="entry name" value="DUF4592"/>
</dbReference>
<dbReference type="PANTHER" id="PTHR47574">
    <property type="entry name" value="CANCER-RELATED REGULATOR OF ACTIN DYNAMICS"/>
    <property type="match status" value="1"/>
</dbReference>
<dbReference type="PANTHER" id="PTHR47574:SF3">
    <property type="entry name" value="CAPPING PROTEIN-INHIBITING REGULATOR OF ACTIN DYNAMICS"/>
    <property type="match status" value="1"/>
</dbReference>
<dbReference type="Pfam" id="PF15262">
    <property type="entry name" value="DUF4592"/>
    <property type="match status" value="1"/>
</dbReference>
<feature type="chain" id="PRO_0000342476" description="Capping protein-inhibiting regulator of actin dynamics">
    <location>
        <begin position="1"/>
        <end position="1291"/>
    </location>
</feature>
<feature type="region of interest" description="Disordered" evidence="2">
    <location>
        <begin position="48"/>
        <end position="71"/>
    </location>
</feature>
<feature type="region of interest" description="Disordered" evidence="2">
    <location>
        <begin position="84"/>
        <end position="137"/>
    </location>
</feature>
<feature type="region of interest" description="Disordered" evidence="2">
    <location>
        <begin position="159"/>
        <end position="221"/>
    </location>
</feature>
<feature type="region of interest" description="Disordered" evidence="2">
    <location>
        <begin position="234"/>
        <end position="253"/>
    </location>
</feature>
<feature type="region of interest" description="Disordered" evidence="2">
    <location>
        <begin position="267"/>
        <end position="663"/>
    </location>
</feature>
<feature type="region of interest" description="Required for interaction with actin-capping proteins" evidence="1">
    <location>
        <begin position="324"/>
        <end position="560"/>
    </location>
</feature>
<feature type="region of interest" description="Disordered" evidence="2">
    <location>
        <begin position="701"/>
        <end position="1238"/>
    </location>
</feature>
<feature type="compositionally biased region" description="Basic residues" evidence="2">
    <location>
        <begin position="159"/>
        <end position="176"/>
    </location>
</feature>
<feature type="compositionally biased region" description="Polar residues" evidence="2">
    <location>
        <begin position="184"/>
        <end position="199"/>
    </location>
</feature>
<feature type="compositionally biased region" description="Basic and acidic residues" evidence="2">
    <location>
        <begin position="201"/>
        <end position="221"/>
    </location>
</feature>
<feature type="compositionally biased region" description="Acidic residues" evidence="2">
    <location>
        <begin position="270"/>
        <end position="291"/>
    </location>
</feature>
<feature type="compositionally biased region" description="Basic and acidic residues" evidence="2">
    <location>
        <begin position="302"/>
        <end position="318"/>
    </location>
</feature>
<feature type="compositionally biased region" description="Basic and acidic residues" evidence="2">
    <location>
        <begin position="326"/>
        <end position="461"/>
    </location>
</feature>
<feature type="compositionally biased region" description="Basic and acidic residues" evidence="2">
    <location>
        <begin position="470"/>
        <end position="483"/>
    </location>
</feature>
<feature type="compositionally biased region" description="Basic and acidic residues" evidence="2">
    <location>
        <begin position="506"/>
        <end position="527"/>
    </location>
</feature>
<feature type="compositionally biased region" description="Basic and acidic residues" evidence="2">
    <location>
        <begin position="534"/>
        <end position="543"/>
    </location>
</feature>
<feature type="compositionally biased region" description="Low complexity" evidence="2">
    <location>
        <begin position="580"/>
        <end position="593"/>
    </location>
</feature>
<feature type="compositionally biased region" description="Basic and acidic residues" evidence="2">
    <location>
        <begin position="594"/>
        <end position="612"/>
    </location>
</feature>
<feature type="compositionally biased region" description="Basic and acidic residues" evidence="2">
    <location>
        <begin position="749"/>
        <end position="778"/>
    </location>
</feature>
<feature type="compositionally biased region" description="Low complexity" evidence="2">
    <location>
        <begin position="875"/>
        <end position="888"/>
    </location>
</feature>
<feature type="compositionally biased region" description="Basic and acidic residues" evidence="2">
    <location>
        <begin position="969"/>
        <end position="983"/>
    </location>
</feature>
<feature type="compositionally biased region" description="Basic and acidic residues" evidence="2">
    <location>
        <begin position="1056"/>
        <end position="1070"/>
    </location>
</feature>
<feature type="compositionally biased region" description="Basic and acidic residues" evidence="2">
    <location>
        <begin position="1081"/>
        <end position="1098"/>
    </location>
</feature>
<feature type="compositionally biased region" description="Basic and acidic residues" evidence="2">
    <location>
        <begin position="1117"/>
        <end position="1141"/>
    </location>
</feature>
<feature type="compositionally biased region" description="Basic and acidic residues" evidence="2">
    <location>
        <begin position="1157"/>
        <end position="1182"/>
    </location>
</feature>
<feature type="compositionally biased region" description="Polar residues" evidence="2">
    <location>
        <begin position="1183"/>
        <end position="1197"/>
    </location>
</feature>
<feature type="compositionally biased region" description="Polar residues" evidence="2">
    <location>
        <begin position="1229"/>
        <end position="1238"/>
    </location>
</feature>
<feature type="modified residue" description="Phosphoserine" evidence="8">
    <location>
        <position position="7"/>
    </location>
</feature>
<feature type="modified residue" description="Phosphoserine" evidence="8">
    <location>
        <position position="28"/>
    </location>
</feature>
<feature type="modified residue" description="Phosphoserine" evidence="8">
    <location>
        <position position="132"/>
    </location>
</feature>
<feature type="modified residue" description="Phosphothreonine" evidence="8">
    <location>
        <position position="482"/>
    </location>
</feature>
<feature type="modified residue" description="Phosphoserine" evidence="8">
    <location>
        <position position="493"/>
    </location>
</feature>
<feature type="modified residue" description="Phosphoserine" evidence="8">
    <location>
        <position position="510"/>
    </location>
</feature>
<feature type="modified residue" description="Phosphoserine" evidence="1">
    <location>
        <position position="636"/>
    </location>
</feature>
<feature type="modified residue" description="Phosphothreonine" evidence="1">
    <location>
        <position position="639"/>
    </location>
</feature>
<feature type="modified residue" description="Phosphoserine" evidence="8">
    <location>
        <position position="867"/>
    </location>
</feature>
<feature type="modified residue" description="Phosphothreonine" evidence="1">
    <location>
        <position position="1033"/>
    </location>
</feature>
<feature type="modified residue" description="Phosphoserine" evidence="1">
    <location>
        <position position="1037"/>
    </location>
</feature>
<feature type="modified residue" description="Phosphoserine" evidence="1">
    <location>
        <position position="1076"/>
    </location>
</feature>
<feature type="splice variant" id="VSP_061664" description="In isoform 4.">
    <location>
        <begin position="1118"/>
        <end position="1120"/>
    </location>
</feature>
<feature type="sequence conflict" description="In Ref. 4; BAC31199." evidence="5" ref="4">
    <original>L</original>
    <variation>V</variation>
    <location>
        <position position="1189"/>
    </location>
</feature>
<feature type="sequence conflict" description="In Ref. 4; BAC34025." evidence="5" ref="4">
    <original>R</original>
    <variation>T</variation>
    <location>
        <position position="1224"/>
    </location>
</feature>
<organism>
    <name type="scientific">Mus musculus</name>
    <name type="common">Mouse</name>
    <dbReference type="NCBI Taxonomy" id="10090"/>
    <lineage>
        <taxon>Eukaryota</taxon>
        <taxon>Metazoa</taxon>
        <taxon>Chordata</taxon>
        <taxon>Craniata</taxon>
        <taxon>Vertebrata</taxon>
        <taxon>Euteleostomi</taxon>
        <taxon>Mammalia</taxon>
        <taxon>Eutheria</taxon>
        <taxon>Euarchontoglires</taxon>
        <taxon>Glires</taxon>
        <taxon>Rodentia</taxon>
        <taxon>Myomorpha</taxon>
        <taxon>Muroidea</taxon>
        <taxon>Muridae</taxon>
        <taxon>Murinae</taxon>
        <taxon>Mus</taxon>
        <taxon>Mus</taxon>
    </lineage>
</organism>
<gene>
    <name evidence="7" type="primary">Cracd</name>
    <name evidence="4" type="synonym">Crad</name>
    <name evidence="1" type="synonym">Kiaa1211</name>
</gene>
<comment type="function">
    <text evidence="1 3">Involved in epithelial cell integrity by acting on the dynamics of the actin cytoskeleton (PubMed:30361697). Positively regulates the actin polymerization, by inhibiting the interaction of actin-capping proteins with actin (By similarity).</text>
</comment>
<comment type="subunit">
    <text evidence="1">Directly interacts with actin-capping proteins CAPZA1, CAPZA2 and CAPZB; this interaction decreases the binding of capping proteins to actin.</text>
</comment>
<comment type="subcellular location">
    <subcellularLocation>
        <location evidence="6">Cytoplasm</location>
        <location evidence="6">Cytosol</location>
    </subcellularLocation>
</comment>
<comment type="alternative products">
    <event type="alternative splicing"/>
    <isoform>
        <id>Q5PR69-3</id>
        <name>3</name>
        <sequence type="displayed"/>
    </isoform>
    <isoform>
        <id>Q5PR69-4</id>
        <name>4</name>
        <sequence type="described" ref="VSP_061664"/>
    </isoform>
</comment>
<comment type="tissue specificity">
    <text evidence="3">Expressed in the small intestine (at protein level).</text>
</comment>
<comment type="disruption phenotype">
    <text evidence="3">Knockout mice display adenoma development in the small intestine in an age-dependent manner. They also develop pulmonary lesions resembling early small cell lung cancer and solid-pseudopapillary neoplasm of the pancreas. Tumors from mutant animals show increased expression of Wnt/beta-catenin target genes without the alteration of other signaling pathways. Intestinal tumors exhibit disorganized and decreased levels of F-actin.</text>
</comment>